<gene>
    <name evidence="1" type="primary">ruvB</name>
    <name type="ordered locus">ATP_00167</name>
</gene>
<feature type="chain" id="PRO_1000116651" description="Holliday junction branch migration complex subunit RuvB">
    <location>
        <begin position="1"/>
        <end position="332"/>
    </location>
</feature>
<feature type="region of interest" description="Large ATPase domain (RuvB-L)" evidence="1">
    <location>
        <begin position="1"/>
        <end position="182"/>
    </location>
</feature>
<feature type="region of interest" description="Small ATPAse domain (RuvB-S)" evidence="1">
    <location>
        <begin position="183"/>
        <end position="253"/>
    </location>
</feature>
<feature type="region of interest" description="Head domain (RuvB-H)" evidence="1">
    <location>
        <begin position="256"/>
        <end position="332"/>
    </location>
</feature>
<feature type="binding site" evidence="1">
    <location>
        <position position="21"/>
    </location>
    <ligand>
        <name>ATP</name>
        <dbReference type="ChEBI" id="CHEBI:30616"/>
    </ligand>
</feature>
<feature type="binding site" evidence="1">
    <location>
        <position position="22"/>
    </location>
    <ligand>
        <name>ATP</name>
        <dbReference type="ChEBI" id="CHEBI:30616"/>
    </ligand>
</feature>
<feature type="binding site" evidence="1">
    <location>
        <position position="63"/>
    </location>
    <ligand>
        <name>ATP</name>
        <dbReference type="ChEBI" id="CHEBI:30616"/>
    </ligand>
</feature>
<feature type="binding site" evidence="1">
    <location>
        <position position="66"/>
    </location>
    <ligand>
        <name>ATP</name>
        <dbReference type="ChEBI" id="CHEBI:30616"/>
    </ligand>
</feature>
<feature type="binding site" evidence="1">
    <location>
        <position position="67"/>
    </location>
    <ligand>
        <name>ATP</name>
        <dbReference type="ChEBI" id="CHEBI:30616"/>
    </ligand>
</feature>
<feature type="binding site" evidence="1">
    <location>
        <position position="67"/>
    </location>
    <ligand>
        <name>Mg(2+)</name>
        <dbReference type="ChEBI" id="CHEBI:18420"/>
    </ligand>
</feature>
<feature type="binding site" evidence="1">
    <location>
        <position position="68"/>
    </location>
    <ligand>
        <name>ATP</name>
        <dbReference type="ChEBI" id="CHEBI:30616"/>
    </ligand>
</feature>
<feature type="binding site" evidence="1">
    <location>
        <begin position="129"/>
        <end position="131"/>
    </location>
    <ligand>
        <name>ATP</name>
        <dbReference type="ChEBI" id="CHEBI:30616"/>
    </ligand>
</feature>
<feature type="binding site" evidence="1">
    <location>
        <position position="172"/>
    </location>
    <ligand>
        <name>ATP</name>
        <dbReference type="ChEBI" id="CHEBI:30616"/>
    </ligand>
</feature>
<feature type="binding site" evidence="1">
    <location>
        <position position="182"/>
    </location>
    <ligand>
        <name>ATP</name>
        <dbReference type="ChEBI" id="CHEBI:30616"/>
    </ligand>
</feature>
<feature type="binding site" evidence="1">
    <location>
        <position position="219"/>
    </location>
    <ligand>
        <name>ATP</name>
        <dbReference type="ChEBI" id="CHEBI:30616"/>
    </ligand>
</feature>
<feature type="binding site" evidence="1">
    <location>
        <position position="311"/>
    </location>
    <ligand>
        <name>DNA</name>
        <dbReference type="ChEBI" id="CHEBI:16991"/>
    </ligand>
</feature>
<feature type="binding site" evidence="1">
    <location>
        <position position="316"/>
    </location>
    <ligand>
        <name>DNA</name>
        <dbReference type="ChEBI" id="CHEBI:16991"/>
    </ligand>
</feature>
<accession>B3R0J0</accession>
<keyword id="KW-0067">ATP-binding</keyword>
<keyword id="KW-0963">Cytoplasm</keyword>
<keyword id="KW-0227">DNA damage</keyword>
<keyword id="KW-0233">DNA recombination</keyword>
<keyword id="KW-0234">DNA repair</keyword>
<keyword id="KW-0238">DNA-binding</keyword>
<keyword id="KW-0378">Hydrolase</keyword>
<keyword id="KW-0547">Nucleotide-binding</keyword>
<keyword id="KW-1185">Reference proteome</keyword>
<dbReference type="EC" id="3.6.4.-" evidence="1"/>
<dbReference type="EMBL" id="CU469464">
    <property type="protein sequence ID" value="CAP18354.1"/>
    <property type="molecule type" value="Genomic_DNA"/>
</dbReference>
<dbReference type="SMR" id="B3R0J0"/>
<dbReference type="STRING" id="37692.ATP_00167"/>
<dbReference type="KEGG" id="pml:ATP_00167"/>
<dbReference type="eggNOG" id="COG2255">
    <property type="taxonomic scope" value="Bacteria"/>
</dbReference>
<dbReference type="HOGENOM" id="CLU_055599_1_0_14"/>
<dbReference type="Proteomes" id="UP000002020">
    <property type="component" value="Chromosome"/>
</dbReference>
<dbReference type="GO" id="GO:0005737">
    <property type="term" value="C:cytoplasm"/>
    <property type="evidence" value="ECO:0007669"/>
    <property type="project" value="UniProtKB-SubCell"/>
</dbReference>
<dbReference type="GO" id="GO:0048476">
    <property type="term" value="C:Holliday junction resolvase complex"/>
    <property type="evidence" value="ECO:0007669"/>
    <property type="project" value="UniProtKB-UniRule"/>
</dbReference>
<dbReference type="GO" id="GO:0005524">
    <property type="term" value="F:ATP binding"/>
    <property type="evidence" value="ECO:0007669"/>
    <property type="project" value="UniProtKB-UniRule"/>
</dbReference>
<dbReference type="GO" id="GO:0016887">
    <property type="term" value="F:ATP hydrolysis activity"/>
    <property type="evidence" value="ECO:0007669"/>
    <property type="project" value="InterPro"/>
</dbReference>
<dbReference type="GO" id="GO:0000400">
    <property type="term" value="F:four-way junction DNA binding"/>
    <property type="evidence" value="ECO:0007669"/>
    <property type="project" value="UniProtKB-UniRule"/>
</dbReference>
<dbReference type="GO" id="GO:0009378">
    <property type="term" value="F:four-way junction helicase activity"/>
    <property type="evidence" value="ECO:0007669"/>
    <property type="project" value="InterPro"/>
</dbReference>
<dbReference type="GO" id="GO:0006310">
    <property type="term" value="P:DNA recombination"/>
    <property type="evidence" value="ECO:0007669"/>
    <property type="project" value="UniProtKB-UniRule"/>
</dbReference>
<dbReference type="GO" id="GO:0006281">
    <property type="term" value="P:DNA repair"/>
    <property type="evidence" value="ECO:0007669"/>
    <property type="project" value="UniProtKB-UniRule"/>
</dbReference>
<dbReference type="CDD" id="cd00009">
    <property type="entry name" value="AAA"/>
    <property type="match status" value="1"/>
</dbReference>
<dbReference type="Gene3D" id="1.10.8.60">
    <property type="match status" value="1"/>
</dbReference>
<dbReference type="Gene3D" id="3.40.50.300">
    <property type="entry name" value="P-loop containing nucleotide triphosphate hydrolases"/>
    <property type="match status" value="1"/>
</dbReference>
<dbReference type="Gene3D" id="1.10.10.10">
    <property type="entry name" value="Winged helix-like DNA-binding domain superfamily/Winged helix DNA-binding domain"/>
    <property type="match status" value="1"/>
</dbReference>
<dbReference type="HAMAP" id="MF_00016">
    <property type="entry name" value="DNA_HJ_migration_RuvB"/>
    <property type="match status" value="1"/>
</dbReference>
<dbReference type="InterPro" id="IPR003593">
    <property type="entry name" value="AAA+_ATPase"/>
</dbReference>
<dbReference type="InterPro" id="IPR041445">
    <property type="entry name" value="AAA_lid_4"/>
</dbReference>
<dbReference type="InterPro" id="IPR004605">
    <property type="entry name" value="DNA_helicase_Holl-junc_RuvB"/>
</dbReference>
<dbReference type="InterPro" id="IPR027417">
    <property type="entry name" value="P-loop_NTPase"/>
</dbReference>
<dbReference type="InterPro" id="IPR008824">
    <property type="entry name" value="RuvB-like_N"/>
</dbReference>
<dbReference type="InterPro" id="IPR008823">
    <property type="entry name" value="RuvB_C"/>
</dbReference>
<dbReference type="InterPro" id="IPR036388">
    <property type="entry name" value="WH-like_DNA-bd_sf"/>
</dbReference>
<dbReference type="InterPro" id="IPR036390">
    <property type="entry name" value="WH_DNA-bd_sf"/>
</dbReference>
<dbReference type="NCBIfam" id="NF000868">
    <property type="entry name" value="PRK00080.1"/>
    <property type="match status" value="1"/>
</dbReference>
<dbReference type="NCBIfam" id="TIGR00635">
    <property type="entry name" value="ruvB"/>
    <property type="match status" value="1"/>
</dbReference>
<dbReference type="PANTHER" id="PTHR42848">
    <property type="match status" value="1"/>
</dbReference>
<dbReference type="PANTHER" id="PTHR42848:SF1">
    <property type="entry name" value="HOLLIDAY JUNCTION BRANCH MIGRATION COMPLEX SUBUNIT RUVB"/>
    <property type="match status" value="1"/>
</dbReference>
<dbReference type="Pfam" id="PF17864">
    <property type="entry name" value="AAA_lid_4"/>
    <property type="match status" value="1"/>
</dbReference>
<dbReference type="Pfam" id="PF05491">
    <property type="entry name" value="RuvB_C"/>
    <property type="match status" value="1"/>
</dbReference>
<dbReference type="Pfam" id="PF05496">
    <property type="entry name" value="RuvB_N"/>
    <property type="match status" value="1"/>
</dbReference>
<dbReference type="SMART" id="SM00382">
    <property type="entry name" value="AAA"/>
    <property type="match status" value="1"/>
</dbReference>
<dbReference type="SUPFAM" id="SSF52540">
    <property type="entry name" value="P-loop containing nucleoside triphosphate hydrolases"/>
    <property type="match status" value="1"/>
</dbReference>
<dbReference type="SUPFAM" id="SSF46785">
    <property type="entry name" value="Winged helix' DNA-binding domain"/>
    <property type="match status" value="1"/>
</dbReference>
<evidence type="ECO:0000255" key="1">
    <source>
        <dbReference type="HAMAP-Rule" id="MF_00016"/>
    </source>
</evidence>
<protein>
    <recommendedName>
        <fullName evidence="1">Holliday junction branch migration complex subunit RuvB</fullName>
        <ecNumber evidence="1">3.6.4.-</ecNumber>
    </recommendedName>
</protein>
<reference key="1">
    <citation type="journal article" date="2008" name="BMC Genomics">
        <title>The linear chromosome of the plant-pathogenic mycoplasma 'Candidatus Phytoplasma mali'.</title>
        <authorList>
            <person name="Kube M."/>
            <person name="Schneider B."/>
            <person name="Kuhl H."/>
            <person name="Dandekar T."/>
            <person name="Heitmann K."/>
            <person name="Migdoll A.M."/>
            <person name="Reinhardt R."/>
            <person name="Seemueller E."/>
        </authorList>
    </citation>
    <scope>NUCLEOTIDE SEQUENCE [LARGE SCALE GENOMIC DNA]</scope>
    <source>
        <strain>AT</strain>
    </source>
</reference>
<comment type="function">
    <text evidence="1">The RuvA-RuvB-RuvC complex processes Holliday junction (HJ) DNA during genetic recombination and DNA repair, while the RuvA-RuvB complex plays an important role in the rescue of blocked DNA replication forks via replication fork reversal (RFR). RuvA specifically binds to HJ cruciform DNA, conferring on it an open structure. The RuvB hexamer acts as an ATP-dependent pump, pulling dsDNA into and through the RuvAB complex. RuvB forms 2 homohexamers on either side of HJ DNA bound by 1 or 2 RuvA tetramers; 4 subunits per hexamer contact DNA at a time. Coordinated motions by a converter formed by DNA-disengaged RuvB subunits stimulates ATP hydrolysis and nucleotide exchange. Immobilization of the converter enables RuvB to convert the ATP-contained energy into a lever motion, pulling 2 nucleotides of DNA out of the RuvA tetramer per ATP hydrolyzed, thus driving DNA branch migration. The RuvB motors rotate together with the DNA substrate, which together with the progressing nucleotide cycle form the mechanistic basis for DNA recombination by continuous HJ branch migration. Branch migration allows RuvC to scan DNA until it finds its consensus sequence, where it cleaves and resolves cruciform DNA.</text>
</comment>
<comment type="catalytic activity">
    <reaction evidence="1">
        <text>ATP + H2O = ADP + phosphate + H(+)</text>
        <dbReference type="Rhea" id="RHEA:13065"/>
        <dbReference type="ChEBI" id="CHEBI:15377"/>
        <dbReference type="ChEBI" id="CHEBI:15378"/>
        <dbReference type="ChEBI" id="CHEBI:30616"/>
        <dbReference type="ChEBI" id="CHEBI:43474"/>
        <dbReference type="ChEBI" id="CHEBI:456216"/>
    </reaction>
</comment>
<comment type="subunit">
    <text evidence="1">Homohexamer. Forms an RuvA(8)-RuvB(12)-Holliday junction (HJ) complex. HJ DNA is sandwiched between 2 RuvA tetramers; dsDNA enters through RuvA and exits via RuvB. An RuvB hexamer assembles on each DNA strand where it exits the tetramer. Each RuvB hexamer is contacted by two RuvA subunits (via domain III) on 2 adjacent RuvB subunits; this complex drives branch migration. In the full resolvosome a probable DNA-RuvA(4)-RuvB(12)-RuvC(2) complex forms which resolves the HJ.</text>
</comment>
<comment type="subcellular location">
    <subcellularLocation>
        <location evidence="1">Cytoplasm</location>
    </subcellularLocation>
</comment>
<comment type="domain">
    <text evidence="1">Has 3 domains, the large (RuvB-L) and small ATPase (RuvB-S) domains and the C-terminal head (RuvB-H) domain. The head domain binds DNA, while the ATPase domains jointly bind ATP, ADP or are empty depending on the state of the subunit in the translocation cycle. During a single DNA translocation step the structure of each domain remains the same, but their relative positions change.</text>
</comment>
<comment type="similarity">
    <text evidence="1">Belongs to the RuvB family.</text>
</comment>
<name>RUVB_PHYMT</name>
<sequence length="332" mass="37848">MKLNKNSELKLSTIDEKEKNLRPETLKEYMGQKNLKEILSVYIKAAKKRKESLEHLLIYGPPGLGKTTLAKIVAKELNVNFKITSGAAMERSGDLVATLSSLQMGDVLFIDEIHRLPKSIEEILYSAMEDYVLDIVLGTENEKKSIRIDLPPFTLIGATTRFGDISSPLRDRFGLILKLNYYSEDELELIIKRTSLVYNTKIDNNTLKKLVKRSRGTPRIANRLFRRIRDFADVYNKGLIDEHISEIALEKLTIDKNGLDDADYTYLKSLIEKFEGGPVGIKNIAANIGEEVSTIEDIYEPYLLKEGYIKRTKRGRIATPLTFKLFKNDKIK</sequence>
<proteinExistence type="inferred from homology"/>
<organism>
    <name type="scientific">Phytoplasma mali (strain AT)</name>
    <dbReference type="NCBI Taxonomy" id="482235"/>
    <lineage>
        <taxon>Bacteria</taxon>
        <taxon>Bacillati</taxon>
        <taxon>Mycoplasmatota</taxon>
        <taxon>Mollicutes</taxon>
        <taxon>Acholeplasmatales</taxon>
        <taxon>Acholeplasmataceae</taxon>
        <taxon>Candidatus Phytoplasma</taxon>
        <taxon>16SrX (Apple proliferation group)</taxon>
    </lineage>
</organism>